<protein>
    <recommendedName>
        <fullName evidence="1">UPF0251 protein TK0562</fullName>
    </recommendedName>
</protein>
<proteinExistence type="inferred from homology"/>
<gene>
    <name type="ordered locus">TK0562</name>
</gene>
<comment type="similarity">
    <text evidence="1">Belongs to the UPF0251 family.</text>
</comment>
<name>Y562_THEKO</name>
<organism>
    <name type="scientific">Thermococcus kodakarensis (strain ATCC BAA-918 / JCM 12380 / KOD1)</name>
    <name type="common">Pyrococcus kodakaraensis (strain KOD1)</name>
    <dbReference type="NCBI Taxonomy" id="69014"/>
    <lineage>
        <taxon>Archaea</taxon>
        <taxon>Methanobacteriati</taxon>
        <taxon>Methanobacteriota</taxon>
        <taxon>Thermococci</taxon>
        <taxon>Thermococcales</taxon>
        <taxon>Thermococcaceae</taxon>
        <taxon>Thermococcus</taxon>
    </lineage>
</organism>
<keyword id="KW-1185">Reference proteome</keyword>
<reference key="1">
    <citation type="journal article" date="2005" name="Genome Res.">
        <title>Complete genome sequence of the hyperthermophilic archaeon Thermococcus kodakaraensis KOD1 and comparison with Pyrococcus genomes.</title>
        <authorList>
            <person name="Fukui T."/>
            <person name="Atomi H."/>
            <person name="Kanai T."/>
            <person name="Matsumi R."/>
            <person name="Fujiwara S."/>
            <person name="Imanaka T."/>
        </authorList>
    </citation>
    <scope>NUCLEOTIDE SEQUENCE [LARGE SCALE GENOMIC DNA]</scope>
    <source>
        <strain>ATCC BAA-918 / JCM 12380 / KOD1</strain>
    </source>
</reference>
<accession>Q5JF37</accession>
<feature type="chain" id="PRO_0000147585" description="UPF0251 protein TK0562">
    <location>
        <begin position="1"/>
        <end position="113"/>
    </location>
</feature>
<evidence type="ECO:0000255" key="1">
    <source>
        <dbReference type="HAMAP-Rule" id="MF_00674"/>
    </source>
</evidence>
<sequence length="113" mass="12928">MPRGMGWGRGRGRRRKMRMIGFIPQVRHFYPAQPPVFQPKPPIFMTYEEFEALRLVDYEGLTQEEAGQRMGVSRGTVWRALTSARKKVAQMLVEGRELIILPGGNEVPRGADE</sequence>
<dbReference type="EMBL" id="AP006878">
    <property type="protein sequence ID" value="BAD84751.1"/>
    <property type="molecule type" value="Genomic_DNA"/>
</dbReference>
<dbReference type="RefSeq" id="WP_011249517.1">
    <property type="nucleotide sequence ID" value="NC_006624.1"/>
</dbReference>
<dbReference type="SMR" id="Q5JF37"/>
<dbReference type="STRING" id="69014.TK0562"/>
<dbReference type="EnsemblBacteria" id="BAD84751">
    <property type="protein sequence ID" value="BAD84751"/>
    <property type="gene ID" value="TK0562"/>
</dbReference>
<dbReference type="GeneID" id="78447076"/>
<dbReference type="KEGG" id="tko:TK0562"/>
<dbReference type="PATRIC" id="fig|69014.16.peg.549"/>
<dbReference type="eggNOG" id="arCOG02238">
    <property type="taxonomic scope" value="Archaea"/>
</dbReference>
<dbReference type="HOGENOM" id="CLU_094511_2_0_2"/>
<dbReference type="InParanoid" id="Q5JF37"/>
<dbReference type="OrthoDB" id="74471at2157"/>
<dbReference type="PhylomeDB" id="Q5JF37"/>
<dbReference type="Proteomes" id="UP000000536">
    <property type="component" value="Chromosome"/>
</dbReference>
<dbReference type="CDD" id="cd06171">
    <property type="entry name" value="Sigma70_r4"/>
    <property type="match status" value="1"/>
</dbReference>
<dbReference type="Gene3D" id="1.10.10.10">
    <property type="entry name" value="Winged helix-like DNA-binding domain superfamily/Winged helix DNA-binding domain"/>
    <property type="match status" value="1"/>
</dbReference>
<dbReference type="HAMAP" id="MF_00674">
    <property type="entry name" value="UPF0251"/>
    <property type="match status" value="1"/>
</dbReference>
<dbReference type="InterPro" id="IPR013324">
    <property type="entry name" value="RNA_pol_sigma_r3/r4-like"/>
</dbReference>
<dbReference type="InterPro" id="IPR002852">
    <property type="entry name" value="UPF0251"/>
</dbReference>
<dbReference type="InterPro" id="IPR036388">
    <property type="entry name" value="WH-like_DNA-bd_sf"/>
</dbReference>
<dbReference type="NCBIfam" id="NF003257">
    <property type="entry name" value="PRK04217.1"/>
    <property type="match status" value="1"/>
</dbReference>
<dbReference type="PANTHER" id="PTHR37478">
    <property type="match status" value="1"/>
</dbReference>
<dbReference type="PANTHER" id="PTHR37478:SF2">
    <property type="entry name" value="UPF0251 PROTEIN TK0562"/>
    <property type="match status" value="1"/>
</dbReference>
<dbReference type="Pfam" id="PF02001">
    <property type="entry name" value="DUF134"/>
    <property type="match status" value="1"/>
</dbReference>
<dbReference type="SUPFAM" id="SSF88659">
    <property type="entry name" value="Sigma3 and sigma4 domains of RNA polymerase sigma factors"/>
    <property type="match status" value="1"/>
</dbReference>